<proteinExistence type="inferred from homology"/>
<sequence>MTGGKSGGKASGSKSSQSRSSKAGLAFPVGRVHRLLRKGNYAQRVGAGAPVYLAAVLEYLAAEILELAGNAARDNKKTRIIPRHLQLAIRNDEELNKLLGHVTIAQGGVMPYIHQNLLPKKTPKTGKNPSQEL</sequence>
<protein>
    <recommendedName>
        <fullName>Histone H2A</fullName>
    </recommendedName>
</protein>
<feature type="initiator methionine" description="Removed" evidence="1">
    <location>
        <position position="1"/>
    </location>
</feature>
<feature type="chain" id="PRO_0000297733" description="Histone H2A">
    <location>
        <begin position="2"/>
        <end position="133"/>
    </location>
</feature>
<feature type="region of interest" description="Disordered" evidence="2">
    <location>
        <begin position="1"/>
        <end position="25"/>
    </location>
</feature>
<feature type="short sequence motif" description="[ST]-Q motif">
    <location>
        <begin position="130"/>
        <end position="131"/>
    </location>
</feature>
<feature type="compositionally biased region" description="Gly residues" evidence="2">
    <location>
        <begin position="1"/>
        <end position="10"/>
    </location>
</feature>
<feature type="compositionally biased region" description="Low complexity" evidence="2">
    <location>
        <begin position="11"/>
        <end position="24"/>
    </location>
</feature>
<feature type="site" description="Not ubiquitinated" evidence="3">
    <location>
        <position position="120"/>
    </location>
</feature>
<feature type="modified residue" description="N6-acetyllysine" evidence="1">
    <location>
        <position position="5"/>
    </location>
</feature>
<feature type="modified residue" description="N6-acetyllysine" evidence="1">
    <location>
        <position position="9"/>
    </location>
</feature>
<feature type="modified residue" description="N5-methylglutamine" evidence="1">
    <location>
        <position position="106"/>
    </location>
</feature>
<feature type="modified residue" description="Phosphoserine" evidence="1">
    <location>
        <position position="130"/>
    </location>
</feature>
<reference key="1">
    <citation type="journal article" date="2009" name="Genome Res.">
        <title>Comparative genomic analyses of the human fungal pathogens Coccidioides and their relatives.</title>
        <authorList>
            <person name="Sharpton T.J."/>
            <person name="Stajich J.E."/>
            <person name="Rounsley S.D."/>
            <person name="Gardner M.J."/>
            <person name="Wortman J.R."/>
            <person name="Jordar V.S."/>
            <person name="Maiti R."/>
            <person name="Kodira C.D."/>
            <person name="Neafsey D.E."/>
            <person name="Zeng Q."/>
            <person name="Hung C.-Y."/>
            <person name="McMahan C."/>
            <person name="Muszewska A."/>
            <person name="Grynberg M."/>
            <person name="Mandel M.A."/>
            <person name="Kellner E.M."/>
            <person name="Barker B.M."/>
            <person name="Galgiani J.N."/>
            <person name="Orbach M.J."/>
            <person name="Kirkland T.N."/>
            <person name="Cole G.T."/>
            <person name="Henn M.R."/>
            <person name="Birren B.W."/>
            <person name="Taylor J.W."/>
        </authorList>
    </citation>
    <scope>NUCLEOTIDE SEQUENCE [LARGE SCALE GENOMIC DNA]</scope>
    <source>
        <strain>RS</strain>
    </source>
</reference>
<reference key="2">
    <citation type="journal article" date="2010" name="Genome Res.">
        <title>Population genomic sequencing of Coccidioides fungi reveals recent hybridization and transposon control.</title>
        <authorList>
            <person name="Neafsey D.E."/>
            <person name="Barker B.M."/>
            <person name="Sharpton T.J."/>
            <person name="Stajich J.E."/>
            <person name="Park D.J."/>
            <person name="Whiston E."/>
            <person name="Hung C.-Y."/>
            <person name="McMahan C."/>
            <person name="White J."/>
            <person name="Sykes S."/>
            <person name="Heiman D."/>
            <person name="Young S."/>
            <person name="Zeng Q."/>
            <person name="Abouelleil A."/>
            <person name="Aftuck L."/>
            <person name="Bessette D."/>
            <person name="Brown A."/>
            <person name="FitzGerald M."/>
            <person name="Lui A."/>
            <person name="Macdonald J.P."/>
            <person name="Priest M."/>
            <person name="Orbach M.J."/>
            <person name="Galgiani J.N."/>
            <person name="Kirkland T.N."/>
            <person name="Cole G.T."/>
            <person name="Birren B.W."/>
            <person name="Henn M.R."/>
            <person name="Taylor J.W."/>
            <person name="Rounsley S.D."/>
        </authorList>
    </citation>
    <scope>GENOME REANNOTATION</scope>
    <source>
        <strain>RS</strain>
    </source>
</reference>
<dbReference type="EMBL" id="GG704911">
    <property type="protein sequence ID" value="EAS36778.3"/>
    <property type="molecule type" value="Genomic_DNA"/>
</dbReference>
<dbReference type="RefSeq" id="XP_001248361.1">
    <property type="nucleotide sequence ID" value="XM_001248360.2"/>
</dbReference>
<dbReference type="SMR" id="Q1E5N1"/>
<dbReference type="FunCoup" id="Q1E5N1">
    <property type="interactions" value="940"/>
</dbReference>
<dbReference type="STRING" id="246410.Q1E5N1"/>
<dbReference type="GeneID" id="4568207"/>
<dbReference type="KEGG" id="cim:CIMG_02132"/>
<dbReference type="VEuPathDB" id="FungiDB:CIMG_02132"/>
<dbReference type="InParanoid" id="Q1E5N1"/>
<dbReference type="OMA" id="CALESQH"/>
<dbReference type="OrthoDB" id="9421954at2759"/>
<dbReference type="Proteomes" id="UP000001261">
    <property type="component" value="Unassembled WGS sequence"/>
</dbReference>
<dbReference type="GO" id="GO:0000786">
    <property type="term" value="C:nucleosome"/>
    <property type="evidence" value="ECO:0007669"/>
    <property type="project" value="UniProtKB-KW"/>
</dbReference>
<dbReference type="GO" id="GO:0005634">
    <property type="term" value="C:nucleus"/>
    <property type="evidence" value="ECO:0007669"/>
    <property type="project" value="UniProtKB-SubCell"/>
</dbReference>
<dbReference type="GO" id="GO:0003677">
    <property type="term" value="F:DNA binding"/>
    <property type="evidence" value="ECO:0007669"/>
    <property type="project" value="UniProtKB-KW"/>
</dbReference>
<dbReference type="GO" id="GO:0046982">
    <property type="term" value="F:protein heterodimerization activity"/>
    <property type="evidence" value="ECO:0007669"/>
    <property type="project" value="InterPro"/>
</dbReference>
<dbReference type="GO" id="GO:0030527">
    <property type="term" value="F:structural constituent of chromatin"/>
    <property type="evidence" value="ECO:0007669"/>
    <property type="project" value="InterPro"/>
</dbReference>
<dbReference type="GO" id="GO:0006281">
    <property type="term" value="P:DNA repair"/>
    <property type="evidence" value="ECO:0007669"/>
    <property type="project" value="UniProtKB-KW"/>
</dbReference>
<dbReference type="CDD" id="cd00074">
    <property type="entry name" value="HFD_H2A"/>
    <property type="match status" value="1"/>
</dbReference>
<dbReference type="FunFam" id="1.10.20.10:FF:000008">
    <property type="entry name" value="Histone H2A"/>
    <property type="match status" value="1"/>
</dbReference>
<dbReference type="Gene3D" id="1.10.20.10">
    <property type="entry name" value="Histone, subunit A"/>
    <property type="match status" value="1"/>
</dbReference>
<dbReference type="InterPro" id="IPR009072">
    <property type="entry name" value="Histone-fold"/>
</dbReference>
<dbReference type="InterPro" id="IPR002119">
    <property type="entry name" value="Histone_H2A"/>
</dbReference>
<dbReference type="InterPro" id="IPR007125">
    <property type="entry name" value="Histone_H2A/H2B/H3"/>
</dbReference>
<dbReference type="InterPro" id="IPR032454">
    <property type="entry name" value="Histone_H2A_C"/>
</dbReference>
<dbReference type="InterPro" id="IPR032458">
    <property type="entry name" value="Histone_H2A_CS"/>
</dbReference>
<dbReference type="PANTHER" id="PTHR23430">
    <property type="entry name" value="HISTONE H2A"/>
    <property type="match status" value="1"/>
</dbReference>
<dbReference type="Pfam" id="PF00125">
    <property type="entry name" value="Histone"/>
    <property type="match status" value="1"/>
</dbReference>
<dbReference type="Pfam" id="PF16211">
    <property type="entry name" value="Histone_H2A_C"/>
    <property type="match status" value="1"/>
</dbReference>
<dbReference type="PRINTS" id="PR00620">
    <property type="entry name" value="HISTONEH2A"/>
</dbReference>
<dbReference type="SMART" id="SM00414">
    <property type="entry name" value="H2A"/>
    <property type="match status" value="1"/>
</dbReference>
<dbReference type="SUPFAM" id="SSF47113">
    <property type="entry name" value="Histone-fold"/>
    <property type="match status" value="1"/>
</dbReference>
<dbReference type="PROSITE" id="PS00046">
    <property type="entry name" value="HISTONE_H2A"/>
    <property type="match status" value="1"/>
</dbReference>
<keyword id="KW-0007">Acetylation</keyword>
<keyword id="KW-0158">Chromosome</keyword>
<keyword id="KW-0227">DNA damage</keyword>
<keyword id="KW-0234">DNA repair</keyword>
<keyword id="KW-0238">DNA-binding</keyword>
<keyword id="KW-0488">Methylation</keyword>
<keyword id="KW-0544">Nucleosome core</keyword>
<keyword id="KW-0539">Nucleus</keyword>
<keyword id="KW-0597">Phosphoprotein</keyword>
<keyword id="KW-1185">Reference proteome</keyword>
<gene>
    <name type="primary">HTA1</name>
    <name type="ORF">CIMG_02132</name>
</gene>
<accession>Q1E5N1</accession>
<accession>J3KL19</accession>
<name>H2A_COCIM</name>
<evidence type="ECO:0000250" key="1"/>
<evidence type="ECO:0000256" key="2">
    <source>
        <dbReference type="SAM" id="MobiDB-lite"/>
    </source>
</evidence>
<evidence type="ECO:0000305" key="3"/>
<comment type="function">
    <text>Core component of nucleosome which plays a central role in DNA double strand break (DSB) repair. Nucleosomes wrap and compact DNA into chromatin, limiting DNA accessibility to the cellular machineries which require DNA as a template. Histones thereby play a central role in transcription regulation, DNA repair, DNA replication and chromosomal stability. DNA accessibility is regulated via a complex set of post-translational modifications of histones, also called histone code, and nucleosome remodeling.</text>
</comment>
<comment type="subunit">
    <text>The nucleosome is a histone octamer containing two molecules each of H2A, H2B, H3 and H4 assembled in one H3-H4 heterotetramer and two H2A-H2B heterodimers. The octamer wraps approximately 147 bp of DNA.</text>
</comment>
<comment type="subcellular location">
    <subcellularLocation>
        <location>Nucleus</location>
    </subcellularLocation>
    <subcellularLocation>
        <location>Chromosome</location>
    </subcellularLocation>
</comment>
<comment type="domain">
    <text>The [ST]-Q motif constitutes a recognition sequence for kinases from the PI3/PI4-kinase family.</text>
</comment>
<comment type="PTM">
    <text evidence="1">Phosphorylated to form H2AS128ph (gamma-H2A) in response to DNA double-strand breaks (DSBs) generated by exogenous genotoxic agents and by stalled replication forks. Phosphorylation is dependent on the DNA damage checkpoint kinases MEC1/ATR and TEL1/ATM, spreads on either side of a detected DSB site and may mark the surrounding chromatin for recruitment of proteins required for DNA damage signaling and repair. Gamma-H2A is removed from the DNA prior to the strand invasion-primer extension step of the repair process and subsequently dephosphorylated. Dephosphorylation is necessary for efficient recovery from the DNA damage checkpoint (By similarity).</text>
</comment>
<comment type="PTM">
    <text evidence="1">Acetylated by ESA1 to form H2AK4ac and H2AK7ac.</text>
</comment>
<comment type="miscellaneous">
    <text evidence="3">In contrast to vertebrates and insects, its C-terminus is not monoubiquitinated.</text>
</comment>
<comment type="similarity">
    <text evidence="3">Belongs to the histone H2A family.</text>
</comment>
<comment type="caution">
    <text evidence="3">To ensure consistency between histone entries, we follow the 'Brno' nomenclature for histone modifications, with positions referring to those used in the literature for the 'closest' model organism. Due to slight variations in histone sequences between organisms and to the presence of initiator methionine in UniProtKB/Swiss-Prot sequences, the actual positions of modified amino acids in the sequence generally differ. In this entry the following conventions are used: H2AK4ac = acetylated Lys-5; H2AK7ac = acetylated Lys-9; H2AS128ph = phosphorylated Ser-130.</text>
</comment>
<organism>
    <name type="scientific">Coccidioides immitis (strain RS)</name>
    <name type="common">Valley fever fungus</name>
    <dbReference type="NCBI Taxonomy" id="246410"/>
    <lineage>
        <taxon>Eukaryota</taxon>
        <taxon>Fungi</taxon>
        <taxon>Dikarya</taxon>
        <taxon>Ascomycota</taxon>
        <taxon>Pezizomycotina</taxon>
        <taxon>Eurotiomycetes</taxon>
        <taxon>Eurotiomycetidae</taxon>
        <taxon>Onygenales</taxon>
        <taxon>Onygenaceae</taxon>
        <taxon>Coccidioides</taxon>
    </lineage>
</organism>